<name>DNA2_XENLA</name>
<dbReference type="EC" id="3.1.-.-"/>
<dbReference type="EC" id="3.6.4.12"/>
<dbReference type="EMBL" id="AF474372">
    <property type="protein sequence ID" value="AAL79550.1"/>
    <property type="molecule type" value="mRNA"/>
</dbReference>
<dbReference type="RefSeq" id="NP_001079231.1">
    <property type="nucleotide sequence ID" value="NM_001085762.1"/>
</dbReference>
<dbReference type="SMR" id="Q8QHA5"/>
<dbReference type="BioGRID" id="97075">
    <property type="interactions" value="9"/>
</dbReference>
<dbReference type="IntAct" id="Q8QHA5">
    <property type="interactions" value="1"/>
</dbReference>
<dbReference type="GeneID" id="378492"/>
<dbReference type="KEGG" id="xla:378492"/>
<dbReference type="AGR" id="Xenbase:XB-GENE-5829000"/>
<dbReference type="CTD" id="378492"/>
<dbReference type="Xenbase" id="XB-GENE-5829000">
    <property type="gene designation" value="dna2.S"/>
</dbReference>
<dbReference type="OrthoDB" id="306218at2759"/>
<dbReference type="Proteomes" id="UP000186698">
    <property type="component" value="Chromosome 7S"/>
</dbReference>
<dbReference type="Bgee" id="378492">
    <property type="expression patterns" value="Expressed in egg cell and 13 other cell types or tissues"/>
</dbReference>
<dbReference type="GO" id="GO:0005737">
    <property type="term" value="C:cytoplasm"/>
    <property type="evidence" value="ECO:0000318"/>
    <property type="project" value="GO_Central"/>
</dbReference>
<dbReference type="GO" id="GO:0005739">
    <property type="term" value="C:mitochondrion"/>
    <property type="evidence" value="ECO:0007669"/>
    <property type="project" value="UniProtKB-SubCell"/>
</dbReference>
<dbReference type="GO" id="GO:0005634">
    <property type="term" value="C:nucleus"/>
    <property type="evidence" value="ECO:0007669"/>
    <property type="project" value="UniProtKB-SubCell"/>
</dbReference>
<dbReference type="GO" id="GO:0051539">
    <property type="term" value="F:4 iron, 4 sulfur cluster binding"/>
    <property type="evidence" value="ECO:0007669"/>
    <property type="project" value="UniProtKB-KW"/>
</dbReference>
<dbReference type="GO" id="GO:0043139">
    <property type="term" value="F:5'-3' DNA helicase activity"/>
    <property type="evidence" value="ECO:0000250"/>
    <property type="project" value="UniProtKB"/>
</dbReference>
<dbReference type="GO" id="GO:0017108">
    <property type="term" value="F:5'-flap endonuclease activity"/>
    <property type="evidence" value="ECO:0000250"/>
    <property type="project" value="UniProtKB"/>
</dbReference>
<dbReference type="GO" id="GO:0005524">
    <property type="term" value="F:ATP binding"/>
    <property type="evidence" value="ECO:0007669"/>
    <property type="project" value="UniProtKB-KW"/>
</dbReference>
<dbReference type="GO" id="GO:0016887">
    <property type="term" value="F:ATP hydrolysis activity"/>
    <property type="evidence" value="ECO:0000250"/>
    <property type="project" value="UniProtKB"/>
</dbReference>
<dbReference type="GO" id="GO:0003677">
    <property type="term" value="F:DNA binding"/>
    <property type="evidence" value="ECO:0000250"/>
    <property type="project" value="UniProtKB"/>
</dbReference>
<dbReference type="GO" id="GO:0046872">
    <property type="term" value="F:metal ion binding"/>
    <property type="evidence" value="ECO:0007669"/>
    <property type="project" value="UniProtKB-KW"/>
</dbReference>
<dbReference type="GO" id="GO:0004518">
    <property type="term" value="F:nuclease activity"/>
    <property type="evidence" value="ECO:0000250"/>
    <property type="project" value="UniProtKB"/>
</dbReference>
<dbReference type="GO" id="GO:0003723">
    <property type="term" value="F:RNA binding"/>
    <property type="evidence" value="ECO:0000318"/>
    <property type="project" value="GO_Central"/>
</dbReference>
<dbReference type="GO" id="GO:0017116">
    <property type="term" value="F:single-stranded DNA helicase activity"/>
    <property type="evidence" value="ECO:0000250"/>
    <property type="project" value="UniProtKB"/>
</dbReference>
<dbReference type="GO" id="GO:0016890">
    <property type="term" value="F:site-specific endodeoxyribonuclease activity, specific for altered base"/>
    <property type="evidence" value="ECO:0000250"/>
    <property type="project" value="UniProtKB"/>
</dbReference>
<dbReference type="GO" id="GO:0006284">
    <property type="term" value="P:base-excision repair"/>
    <property type="evidence" value="ECO:0000250"/>
    <property type="project" value="UniProtKB"/>
</dbReference>
<dbReference type="GO" id="GO:0000729">
    <property type="term" value="P:DNA double-strand break processing"/>
    <property type="evidence" value="ECO:0000250"/>
    <property type="project" value="UniProtKB"/>
</dbReference>
<dbReference type="GO" id="GO:0006260">
    <property type="term" value="P:DNA replication"/>
    <property type="evidence" value="ECO:0000250"/>
    <property type="project" value="UniProtKB"/>
</dbReference>
<dbReference type="GO" id="GO:0000076">
    <property type="term" value="P:DNA replication checkpoint signaling"/>
    <property type="evidence" value="ECO:0000250"/>
    <property type="project" value="UniProtKB"/>
</dbReference>
<dbReference type="GO" id="GO:0033567">
    <property type="term" value="P:DNA replication, Okazaki fragment processing"/>
    <property type="evidence" value="ECO:0000250"/>
    <property type="project" value="UniProtKB"/>
</dbReference>
<dbReference type="GO" id="GO:0043137">
    <property type="term" value="P:DNA replication, removal of RNA primer"/>
    <property type="evidence" value="ECO:0000250"/>
    <property type="project" value="UniProtKB"/>
</dbReference>
<dbReference type="GO" id="GO:0045002">
    <property type="term" value="P:double-strand break repair via single-strand annealing"/>
    <property type="evidence" value="ECO:0000314"/>
    <property type="project" value="CACAO"/>
</dbReference>
<dbReference type="GO" id="GO:0006264">
    <property type="term" value="P:mitochondrial DNA replication"/>
    <property type="evidence" value="ECO:0000250"/>
    <property type="project" value="UniProtKB"/>
</dbReference>
<dbReference type="GO" id="GO:0045740">
    <property type="term" value="P:positive regulation of DNA replication"/>
    <property type="evidence" value="ECO:0000250"/>
    <property type="project" value="UniProtKB"/>
</dbReference>
<dbReference type="GO" id="GO:0071932">
    <property type="term" value="P:replication fork reversal"/>
    <property type="evidence" value="ECO:0000318"/>
    <property type="project" value="GO_Central"/>
</dbReference>
<dbReference type="CDD" id="cd18041">
    <property type="entry name" value="DEXXQc_DNA2"/>
    <property type="match status" value="1"/>
</dbReference>
<dbReference type="CDD" id="cd22318">
    <property type="entry name" value="DNA2_N-like"/>
    <property type="match status" value="1"/>
</dbReference>
<dbReference type="CDD" id="cd18808">
    <property type="entry name" value="SF1_C_Upf1"/>
    <property type="match status" value="1"/>
</dbReference>
<dbReference type="FunFam" id="3.40.50.300:FF:000721">
    <property type="entry name" value="DNA replication ATP-dependent helicase/nuclease DNA2"/>
    <property type="match status" value="1"/>
</dbReference>
<dbReference type="FunFam" id="3.40.50.300:FF:000789">
    <property type="entry name" value="DNA replication ATP-dependent helicase/nuclease DNA2"/>
    <property type="match status" value="1"/>
</dbReference>
<dbReference type="FunFam" id="3.40.50.300:FF:000915">
    <property type="entry name" value="DNA replication ATP-dependent helicase/nuclease DNA2"/>
    <property type="match status" value="1"/>
</dbReference>
<dbReference type="Gene3D" id="3.90.320.10">
    <property type="match status" value="1"/>
</dbReference>
<dbReference type="Gene3D" id="3.40.50.300">
    <property type="entry name" value="P-loop containing nucleotide triphosphate hydrolases"/>
    <property type="match status" value="3"/>
</dbReference>
<dbReference type="InterPro" id="IPR026851">
    <property type="entry name" value="Dna2/JHS1_DEXXQ-box"/>
</dbReference>
<dbReference type="InterPro" id="IPR045055">
    <property type="entry name" value="DNA2/NAM7-like"/>
</dbReference>
<dbReference type="InterPro" id="IPR041679">
    <property type="entry name" value="DNA2/NAM7-like_C"/>
</dbReference>
<dbReference type="InterPro" id="IPR041677">
    <property type="entry name" value="DNA2/NAM7_AAA_11"/>
</dbReference>
<dbReference type="InterPro" id="IPR048459">
    <property type="entry name" value="DNA2_Rift"/>
</dbReference>
<dbReference type="InterPro" id="IPR014808">
    <property type="entry name" value="DNA_replication_fac_Dna2_N"/>
</dbReference>
<dbReference type="InterPro" id="IPR027417">
    <property type="entry name" value="P-loop_NTPase"/>
</dbReference>
<dbReference type="InterPro" id="IPR011604">
    <property type="entry name" value="PDDEXK-like_dom_sf"/>
</dbReference>
<dbReference type="InterPro" id="IPR047187">
    <property type="entry name" value="SF1_C_Upf1"/>
</dbReference>
<dbReference type="PANTHER" id="PTHR10887:SF433">
    <property type="entry name" value="DNA REPLICATION ATP-DEPENDENT HELICASE_NUCLEASE DNA2"/>
    <property type="match status" value="1"/>
</dbReference>
<dbReference type="PANTHER" id="PTHR10887">
    <property type="entry name" value="DNA2/NAM7 HELICASE FAMILY"/>
    <property type="match status" value="1"/>
</dbReference>
<dbReference type="Pfam" id="PF13086">
    <property type="entry name" value="AAA_11"/>
    <property type="match status" value="2"/>
</dbReference>
<dbReference type="Pfam" id="PF13087">
    <property type="entry name" value="AAA_12"/>
    <property type="match status" value="1"/>
</dbReference>
<dbReference type="Pfam" id="PF08696">
    <property type="entry name" value="Dna2"/>
    <property type="match status" value="1"/>
</dbReference>
<dbReference type="Pfam" id="PF21123">
    <property type="entry name" value="Dna2_Rift"/>
    <property type="match status" value="1"/>
</dbReference>
<dbReference type="SUPFAM" id="SSF52540">
    <property type="entry name" value="P-loop containing nucleoside triphosphate hydrolases"/>
    <property type="match status" value="1"/>
</dbReference>
<evidence type="ECO:0000250" key="1"/>
<evidence type="ECO:0000250" key="2">
    <source>
        <dbReference type="UniProtKB" id="P51530"/>
    </source>
</evidence>
<evidence type="ECO:0000255" key="3"/>
<evidence type="ECO:0000269" key="4">
    <source>
    </source>
</evidence>
<evidence type="ECO:0000305" key="5"/>
<sequence length="1053" mass="119732">MEPVSAECHLPPEDDLLEMMMEQSFTEPEEKSQDKPTRKIIPKTKLCKGVNNRYCVLHIKEVYAQREEKHLTITASQEGDDLELCILKDDWVALQIKPGDIIHLEGNCSVDNTWTISRDTGYLILYPDLLISGTSIANGIRCLRRSVLSEKFKVCDKGSRQMLNGTMLHDIFQRATTCGFTDSVLQELAHHTVHGPKYLKEMYQLKLNQADVMGEIQEYLPSLSKWATDFMTHPLNQQQINRTKSTAGDPTETTKVSEFLDIEENIWSPRFGLKGKIDVTARVKIHQKSKAHLKIMPLELKTGKESNSIEHRSQVVLYTLLSQERREDPEAGLLLYLKTGNMYTVPGNRLDRRELLKIRNELSYYLTNVLHKSDNGSKETTLASLPAMIADRQACKYCSQMRNCALYNRSVEQQTENCYIPPEMIPVVQKETEHLTEDHLQYFRLWYLMCTLEANSKDSKMGRKNIWMMSSSEREEDGQCIGNLIRTGHVQTISDVQYLHSFQRRSGSVPATNLASGDRVVVSGEERFLALSTGYIKEVKDENITCILDRSLVKLPEDLLFRLDHEEGGGGLEFHLGNLSRLMENSSVSEKLRKLIIDFSKPNFVQHLSSILPPDAKDIVASILRGLNKPQKQAMKRVLLSKDYTLIVGMPGTGKTTTICTLVRILYACGFSVLLTSYTHSAVDNILLKLKKFQVGFLRLGRTQKLHPDVQEFSEEEICKAKSIKSLSALEELYNSQPVVATTCMGVNHPIFTRRRFDFCIVDEASQISQPICLGPLFFADRFVLVGDHQQLPPLVKSAEARELGMSESLFKRLERNQEAVVQLTVQYRMNSKIMALSNKLVYEGRLECASDRVSNAVVQLPHIKTLLLELEFRESQESMWIKDVLEPSNPVCFLNTEKIPALETEEKGGISNWIEAKLVFHLTKLYLKAGCRPSDIGIIAPYRQQLKMISNYFNSLSASAVEVNTVDKYQGRDKSVIIVSFVRSNIDGKLGDLLKDWRRLNVALTRAKHKLIMLGCVPTLNRFDCLEQLICNLKTENQIYDLPEGAHEHFPV</sequence>
<reference key="1">
    <citation type="journal article" date="2000" name="J. Biol. Chem.">
        <title>Identification of the Xenopus laevis homolog of Saccharomyces cerevisiae DNA2 and its role in DNA replication.</title>
        <authorList>
            <person name="Liu Q."/>
            <person name="Choe W.-C."/>
            <person name="Campbell J.L."/>
        </authorList>
    </citation>
    <scope>NUCLEOTIDE SEQUENCE [MRNA]</scope>
    <scope>FUNCTION</scope>
    <scope>MUTAGENESIS OF LYS-655</scope>
    <source>
        <tissue>Oocyte</tissue>
    </source>
</reference>
<feature type="chain" id="PRO_0000263606" description="DNA replication ATP-dependent helicase/nuclease DNA2">
    <location>
        <begin position="1"/>
        <end position="1053"/>
    </location>
</feature>
<feature type="region of interest" description="Nuclease activity" evidence="1">
    <location>
        <begin position="86"/>
        <end position="521"/>
    </location>
</feature>
<feature type="region of interest" description="Helicase activity" evidence="1">
    <location>
        <begin position="522"/>
        <end position="1053"/>
    </location>
</feature>
<feature type="binding site" evidence="1">
    <location>
        <position position="142"/>
    </location>
    <ligand>
        <name>[4Fe-4S] cluster</name>
        <dbReference type="ChEBI" id="CHEBI:49883"/>
    </ligand>
</feature>
<feature type="binding site" evidence="1">
    <location>
        <position position="395"/>
    </location>
    <ligand>
        <name>[4Fe-4S] cluster</name>
        <dbReference type="ChEBI" id="CHEBI:49883"/>
    </ligand>
</feature>
<feature type="binding site" evidence="1">
    <location>
        <position position="398"/>
    </location>
    <ligand>
        <name>[4Fe-4S] cluster</name>
        <dbReference type="ChEBI" id="CHEBI:49883"/>
    </ligand>
</feature>
<feature type="binding site" evidence="1">
    <location>
        <position position="404"/>
    </location>
    <ligand>
        <name>[4Fe-4S] cluster</name>
        <dbReference type="ChEBI" id="CHEBI:49883"/>
    </ligand>
</feature>
<feature type="binding site" evidence="3">
    <location>
        <begin position="649"/>
        <end position="656"/>
    </location>
    <ligand>
        <name>ATP</name>
        <dbReference type="ChEBI" id="CHEBI:30616"/>
    </ligand>
</feature>
<feature type="mutagenesis site" description="Loss of ATPase activity in vitro." evidence="4">
    <original>K</original>
    <variation>E</variation>
    <location>
        <position position="655"/>
    </location>
</feature>
<accession>Q8QHA5</accession>
<protein>
    <recommendedName>
        <fullName>DNA replication ATP-dependent helicase/nuclease DNA2</fullName>
    </recommendedName>
    <alternativeName>
        <fullName>DNA replication ATP-dependent helicase-like homolog</fullName>
    </alternativeName>
    <domain>
        <recommendedName>
            <fullName>DNA replication nuclease DNA2</fullName>
            <ecNumber>3.1.-.-</ecNumber>
        </recommendedName>
    </domain>
    <domain>
        <recommendedName>
            <fullName>DNA replication ATP-dependent helicase DNA2</fullName>
            <ecNumber>3.6.4.12</ecNumber>
        </recommendedName>
    </domain>
</protein>
<comment type="function">
    <text evidence="2 4">Key enzyme involved in DNA replication and DNA repair in nucleus and mitochondrion. Involved in Okazaki fragments processing by cleaving long flaps that escape fen1: flaps that are longer than 27 nucleotides are coated by replication protein A complex (RPA), leading to recruit dna2 which cleaves the flap until it is too short to bind RPA and becomes a substrate for FEN1. Also involved in 5'-end resection of DNA during double-strand break (DSB) repair by mediating the cleavage of 5'-ssDNA, while the 3'-ssDNA cleavage is prevented by the presence of RPA. Also involved in DNA replication checkpoint independently of Okazaki fragments processing (By similarity). Possesses different enzymatic activities, such as single-stranded DNA (ssDNA)-dependent ATPase, 5'-3' helicase and endonuclease activities. While the ATPase and endonuclease activities are well-defined and play a key role in Okazaki fragments processing and DSB repair, the 5'-3' DNA helicase activity is subject to debate. According to various reports, the helicase activity is weak and its function remains largely unclear. Helicase activity may promote the motion of dna2 on the flap, helping the nuclease function.</text>
</comment>
<comment type="catalytic activity">
    <reaction>
        <text>ATP + H2O = ADP + phosphate + H(+)</text>
        <dbReference type="Rhea" id="RHEA:13065"/>
        <dbReference type="ChEBI" id="CHEBI:15377"/>
        <dbReference type="ChEBI" id="CHEBI:15378"/>
        <dbReference type="ChEBI" id="CHEBI:30616"/>
        <dbReference type="ChEBI" id="CHEBI:43474"/>
        <dbReference type="ChEBI" id="CHEBI:456216"/>
        <dbReference type="EC" id="3.6.4.12"/>
    </reaction>
</comment>
<comment type="cofactor">
    <cofactor evidence="1">
        <name>[4Fe-4S] cluster</name>
        <dbReference type="ChEBI" id="CHEBI:49883"/>
    </cofactor>
    <text evidence="1">Binds 1 [4Fe-4S] cluster.</text>
</comment>
<comment type="subcellular location">
    <subcellularLocation>
        <location evidence="2">Nucleus</location>
    </subcellularLocation>
    <subcellularLocation>
        <location evidence="2">Mitochondrion</location>
    </subcellularLocation>
</comment>
<comment type="similarity">
    <text evidence="5">Belongs to the DNA2/NAM7 helicase family.</text>
</comment>
<keyword id="KW-0004">4Fe-4S</keyword>
<keyword id="KW-0067">ATP-binding</keyword>
<keyword id="KW-0227">DNA damage</keyword>
<keyword id="KW-0234">DNA repair</keyword>
<keyword id="KW-0235">DNA replication</keyword>
<keyword id="KW-0238">DNA-binding</keyword>
<keyword id="KW-0255">Endonuclease</keyword>
<keyword id="KW-0347">Helicase</keyword>
<keyword id="KW-0378">Hydrolase</keyword>
<keyword id="KW-0408">Iron</keyword>
<keyword id="KW-0411">Iron-sulfur</keyword>
<keyword id="KW-0479">Metal-binding</keyword>
<keyword id="KW-0496">Mitochondrion</keyword>
<keyword id="KW-0511">Multifunctional enzyme</keyword>
<keyword id="KW-0540">Nuclease</keyword>
<keyword id="KW-0547">Nucleotide-binding</keyword>
<keyword id="KW-0539">Nucleus</keyword>
<keyword id="KW-1185">Reference proteome</keyword>
<gene>
    <name type="primary">dna2</name>
    <name type="synonym">dna2l</name>
</gene>
<organism>
    <name type="scientific">Xenopus laevis</name>
    <name type="common">African clawed frog</name>
    <dbReference type="NCBI Taxonomy" id="8355"/>
    <lineage>
        <taxon>Eukaryota</taxon>
        <taxon>Metazoa</taxon>
        <taxon>Chordata</taxon>
        <taxon>Craniata</taxon>
        <taxon>Vertebrata</taxon>
        <taxon>Euteleostomi</taxon>
        <taxon>Amphibia</taxon>
        <taxon>Batrachia</taxon>
        <taxon>Anura</taxon>
        <taxon>Pipoidea</taxon>
        <taxon>Pipidae</taxon>
        <taxon>Xenopodinae</taxon>
        <taxon>Xenopus</taxon>
        <taxon>Xenopus</taxon>
    </lineage>
</organism>
<proteinExistence type="evidence at protein level"/>